<evidence type="ECO:0000250" key="1">
    <source>
        <dbReference type="UniProtKB" id="Q9Z315"/>
    </source>
</evidence>
<evidence type="ECO:0000255" key="2"/>
<evidence type="ECO:0000256" key="3">
    <source>
        <dbReference type="SAM" id="MobiDB-lite"/>
    </source>
</evidence>
<evidence type="ECO:0000269" key="4">
    <source>
    </source>
</evidence>
<evidence type="ECO:0000269" key="5">
    <source>
    </source>
</evidence>
<evidence type="ECO:0000269" key="6">
    <source>
    </source>
</evidence>
<evidence type="ECO:0000269" key="7">
    <source>
    </source>
</evidence>
<evidence type="ECO:0000269" key="8">
    <source>
    </source>
</evidence>
<evidence type="ECO:0000269" key="9">
    <source>
    </source>
</evidence>
<evidence type="ECO:0000269" key="10">
    <source>
    </source>
</evidence>
<evidence type="ECO:0000269" key="11">
    <source ref="4"/>
</evidence>
<evidence type="ECO:0000305" key="12"/>
<evidence type="ECO:0007744" key="13">
    <source>
    </source>
</evidence>
<evidence type="ECO:0007744" key="14">
    <source>
    </source>
</evidence>
<evidence type="ECO:0007744" key="15">
    <source>
    </source>
</evidence>
<evidence type="ECO:0007744" key="16">
    <source>
    </source>
</evidence>
<evidence type="ECO:0007744" key="17">
    <source>
    </source>
</evidence>
<evidence type="ECO:0007744" key="18">
    <source>
    </source>
</evidence>
<evidence type="ECO:0007744" key="19">
    <source>
    </source>
</evidence>
<evidence type="ECO:0007744" key="20">
    <source>
    </source>
</evidence>
<evidence type="ECO:0007744" key="21">
    <source>
    </source>
</evidence>
<evidence type="ECO:0007744" key="22">
    <source>
    </source>
</evidence>
<evidence type="ECO:0007744" key="23">
    <source>
    </source>
</evidence>
<evidence type="ECO:0007744" key="24">
    <source>
    </source>
</evidence>
<evidence type="ECO:0007744" key="25">
    <source>
    </source>
</evidence>
<evidence type="ECO:0007744" key="26">
    <source>
    </source>
</evidence>
<evidence type="ECO:0007829" key="27">
    <source>
        <dbReference type="PDB" id="4PYU"/>
    </source>
</evidence>
<evidence type="ECO:0007829" key="28">
    <source>
        <dbReference type="PDB" id="8Q7N"/>
    </source>
</evidence>
<evidence type="ECO:0007829" key="29">
    <source>
        <dbReference type="PDB" id="8QOZ"/>
    </source>
</evidence>
<evidence type="ECO:0007829" key="30">
    <source>
        <dbReference type="PDB" id="8QP8"/>
    </source>
</evidence>
<protein>
    <recommendedName>
        <fullName>U4/U6.U5 tri-snRNP-associated protein 1</fullName>
    </recommendedName>
    <alternativeName>
        <fullName>SNU66 homolog</fullName>
        <shortName>hSnu66</shortName>
    </alternativeName>
    <alternativeName>
        <fullName>Squamous cell carcinoma antigen recognized by T-cells 1</fullName>
        <shortName>SART-1</shortName>
        <shortName>hSART-1</shortName>
    </alternativeName>
    <alternativeName>
        <fullName>U4/U6.U5 tri-snRNP-associated 110 kDa protein</fullName>
    </alternativeName>
    <allergenName>Hom s 1</allergenName>
</protein>
<name>SNUT1_HUMAN</name>
<gene>
    <name type="primary">SART1</name>
</gene>
<organism>
    <name type="scientific">Homo sapiens</name>
    <name type="common">Human</name>
    <dbReference type="NCBI Taxonomy" id="9606"/>
    <lineage>
        <taxon>Eukaryota</taxon>
        <taxon>Metazoa</taxon>
        <taxon>Chordata</taxon>
        <taxon>Craniata</taxon>
        <taxon>Vertebrata</taxon>
        <taxon>Euteleostomi</taxon>
        <taxon>Mammalia</taxon>
        <taxon>Eutheria</taxon>
        <taxon>Euarchontoglires</taxon>
        <taxon>Primates</taxon>
        <taxon>Haplorrhini</taxon>
        <taxon>Catarrhini</taxon>
        <taxon>Hominidae</taxon>
        <taxon>Homo</taxon>
    </lineage>
</organism>
<reference key="1">
    <citation type="journal article" date="1998" name="J. Exp. Med.">
        <title>A gene encoding antigenic peptides of human squamous cell carcinoma recognized cytotoxic T lymphocytes.</title>
        <authorList>
            <person name="Shichijo S."/>
            <person name="Nakao M."/>
            <person name="Imai Y."/>
            <person name="Takasu H."/>
            <person name="Kawamoto M."/>
            <person name="Niiya F."/>
            <person name="Yang D."/>
            <person name="Toh Y."/>
            <person name="Yamana H."/>
            <person name="Itoh K."/>
        </authorList>
    </citation>
    <scope>NUCLEOTIDE SEQUENCE [MRNA]</scope>
    <scope>TISSUE SPECIFICITY</scope>
    <scope>SUBCELLULAR LOCATION</scope>
</reference>
<reference key="2">
    <citation type="journal article" date="2001" name="EMBO J.">
        <title>The 65 and 110 kDa SR-related proteins of the U4/U6*U5 tri-snRNP are essential for the assembly of mature spliceosomes.</title>
        <authorList>
            <person name="Makarova O.V."/>
            <person name="Makarov E.M."/>
            <person name="Luehrmann R."/>
        </authorList>
    </citation>
    <scope>NUCLEOTIDE SEQUENCE [MRNA]</scope>
    <scope>SUBCELLULAR LOCATION</scope>
    <scope>FUNCTION</scope>
    <scope>SUBUNIT</scope>
</reference>
<reference key="3">
    <citation type="submission" date="2003-05" db="EMBL/GenBank/DDBJ databases">
        <title>Cloning of human full-length CDSs in BD Creator(TM) system donor vector.</title>
        <authorList>
            <person name="Kalnine N."/>
            <person name="Chen X."/>
            <person name="Rolfs A."/>
            <person name="Halleck A."/>
            <person name="Hines L."/>
            <person name="Eisenstein S."/>
            <person name="Koundinya M."/>
            <person name="Raphael J."/>
            <person name="Moreira D."/>
            <person name="Kelley T."/>
            <person name="LaBaer J."/>
            <person name="Lin Y."/>
            <person name="Phelan M."/>
            <person name="Farmer A."/>
        </authorList>
    </citation>
    <scope>NUCLEOTIDE SEQUENCE [LARGE SCALE MRNA]</scope>
</reference>
<reference key="4">
    <citation type="submission" date="2005-04" db="EMBL/GenBank/DDBJ databases">
        <authorList>
            <person name="Suzuki Y."/>
            <person name="Sugano S."/>
            <person name="Totoki Y."/>
            <person name="Toyoda A."/>
            <person name="Takeda T."/>
            <person name="Sakaki Y."/>
            <person name="Tanaka A."/>
            <person name="Yokoyama S."/>
        </authorList>
    </citation>
    <scope>NUCLEOTIDE SEQUENCE [LARGE SCALE MRNA]</scope>
    <scope>VARIANT ALA-485</scope>
    <source>
        <tissue>Small intestine</tissue>
    </source>
</reference>
<reference key="5">
    <citation type="journal article" date="2006" name="Nature">
        <title>Human chromosome 11 DNA sequence and analysis including novel gene identification.</title>
        <authorList>
            <person name="Taylor T.D."/>
            <person name="Noguchi H."/>
            <person name="Totoki Y."/>
            <person name="Toyoda A."/>
            <person name="Kuroki Y."/>
            <person name="Dewar K."/>
            <person name="Lloyd C."/>
            <person name="Itoh T."/>
            <person name="Takeda T."/>
            <person name="Kim D.-W."/>
            <person name="She X."/>
            <person name="Barlow K.F."/>
            <person name="Bloom T."/>
            <person name="Bruford E."/>
            <person name="Chang J.L."/>
            <person name="Cuomo C.A."/>
            <person name="Eichler E."/>
            <person name="FitzGerald M.G."/>
            <person name="Jaffe D.B."/>
            <person name="LaButti K."/>
            <person name="Nicol R."/>
            <person name="Park H.-S."/>
            <person name="Seaman C."/>
            <person name="Sougnez C."/>
            <person name="Yang X."/>
            <person name="Zimmer A.R."/>
            <person name="Zody M.C."/>
            <person name="Birren B.W."/>
            <person name="Nusbaum C."/>
            <person name="Fujiyama A."/>
            <person name="Hattori M."/>
            <person name="Rogers J."/>
            <person name="Lander E.S."/>
            <person name="Sakaki Y."/>
        </authorList>
    </citation>
    <scope>NUCLEOTIDE SEQUENCE [LARGE SCALE GENOMIC DNA]</scope>
</reference>
<reference key="6">
    <citation type="journal article" date="2004" name="Genome Res.">
        <title>The status, quality, and expansion of the NIH full-length cDNA project: the Mammalian Gene Collection (MGC).</title>
        <authorList>
            <consortium name="The MGC Project Team"/>
        </authorList>
    </citation>
    <scope>NUCLEOTIDE SEQUENCE [LARGE SCALE MRNA]</scope>
    <source>
        <tissue>Placenta</tissue>
    </source>
</reference>
<reference key="7">
    <citation type="journal article" date="2001" name="Gene">
        <title>Intron loss in the SART1 genes of Fugu rubripes and Tetraodon nigroviridis.</title>
        <authorList>
            <person name="Bolland D.J."/>
            <person name="Hewitt J.E."/>
        </authorList>
    </citation>
    <scope>NUCLEOTIDE SEQUENCE [GENOMIC DNA] OF 639-732</scope>
</reference>
<reference key="8">
    <citation type="journal article" date="1998" name="J. Invest. Dermatol.">
        <title>Molecular characterization of an autoallergen, Hom s 1, identified by serum IgE from atopic dermatitis patients.</title>
        <authorList>
            <person name="Valenta R."/>
            <person name="Natter S."/>
            <person name="Seiberler S."/>
            <person name="Wichlas S."/>
            <person name="Maurer D."/>
            <person name="Hess M."/>
            <person name="Pavelka M."/>
            <person name="Grote M."/>
            <person name="Ferreira F."/>
            <person name="Szepfalusi Z."/>
            <person name="Valent P."/>
            <person name="Stingl G."/>
        </authorList>
    </citation>
    <scope>PARTIAL NUCLEOTIDE SEQUENCE [MRNA]</scope>
    <scope>ALLERGEN</scope>
</reference>
<reference key="9">
    <citation type="journal article" date="2002" name="RNA">
        <title>Purification and characterization of native spliceosomes suitable for three-dimensional structural analysis.</title>
        <authorList>
            <person name="Jurica M.S."/>
            <person name="Licklider L.J."/>
            <person name="Gygi S.P."/>
            <person name="Grigorieff N."/>
            <person name="Moore M.J."/>
        </authorList>
    </citation>
    <scope>IDENTIFICATION BY MASS SPECTROMETRY</scope>
    <scope>IDENTIFICATION IN THE SPLICEOSOMAL C COMPLEX</scope>
</reference>
<reference key="10">
    <citation type="journal article" date="2006" name="Cell">
        <title>Global, in vivo, and site-specific phosphorylation dynamics in signaling networks.</title>
        <authorList>
            <person name="Olsen J.V."/>
            <person name="Blagoev B."/>
            <person name="Gnad F."/>
            <person name="Macek B."/>
            <person name="Kumar C."/>
            <person name="Mortensen P."/>
            <person name="Mann M."/>
        </authorList>
    </citation>
    <scope>PHOSPHORYLATION [LARGE SCALE ANALYSIS] AT SER-448 AND SER-591</scope>
    <scope>IDENTIFICATION BY MASS SPECTROMETRY [LARGE SCALE ANALYSIS]</scope>
    <source>
        <tissue>Cervix carcinoma</tissue>
    </source>
</reference>
<reference key="11">
    <citation type="journal article" date="2006" name="RNA">
        <title>The network of protein-protein interactions within the human U4/U6.U5 tri-snRNP.</title>
        <authorList>
            <person name="Liu S."/>
            <person name="Rauhut R."/>
            <person name="Vornlocher H.-P."/>
            <person name="Luehrmann R."/>
        </authorList>
    </citation>
    <scope>SUBUNIT</scope>
</reference>
<reference key="12">
    <citation type="journal article" date="2007" name="Science">
        <title>ATM and ATR substrate analysis reveals extensive protein networks responsive to DNA damage.</title>
        <authorList>
            <person name="Matsuoka S."/>
            <person name="Ballif B.A."/>
            <person name="Smogorzewska A."/>
            <person name="McDonald E.R. III"/>
            <person name="Hurov K.E."/>
            <person name="Luo J."/>
            <person name="Bakalarski C.E."/>
            <person name="Zhao Z."/>
            <person name="Solimini N."/>
            <person name="Lerenthal Y."/>
            <person name="Shiloh Y."/>
            <person name="Gygi S.P."/>
            <person name="Elledge S.J."/>
        </authorList>
    </citation>
    <scope>PHOSPHORYLATION [LARGE SCALE ANALYSIS] AT THR-430 AND THR-695</scope>
    <scope>IDENTIFICATION BY MASS SPECTROMETRY [LARGE SCALE ANALYSIS]</scope>
    <source>
        <tissue>Embryonic kidney</tissue>
    </source>
</reference>
<reference key="13">
    <citation type="journal article" date="2008" name="J. Proteome Res.">
        <title>Combining protein-based IMAC, peptide-based IMAC, and MudPIT for efficient phosphoproteomic analysis.</title>
        <authorList>
            <person name="Cantin G.T."/>
            <person name="Yi W."/>
            <person name="Lu B."/>
            <person name="Park S.K."/>
            <person name="Xu T."/>
            <person name="Lee J.-D."/>
            <person name="Yates J.R. III"/>
        </authorList>
    </citation>
    <scope>PHOSPHORYLATION [LARGE SCALE ANALYSIS] AT SER-448</scope>
    <scope>IDENTIFICATION BY MASS SPECTROMETRY [LARGE SCALE ANALYSIS]</scope>
    <source>
        <tissue>Cervix carcinoma</tissue>
    </source>
</reference>
<reference key="14">
    <citation type="journal article" date="2008" name="Proc. Natl. Acad. Sci. U.S.A.">
        <title>A quantitative atlas of mitotic phosphorylation.</title>
        <authorList>
            <person name="Dephoure N."/>
            <person name="Zhou C."/>
            <person name="Villen J."/>
            <person name="Beausoleil S.A."/>
            <person name="Bakalarski C.E."/>
            <person name="Elledge S.J."/>
            <person name="Gygi S.P."/>
        </authorList>
    </citation>
    <scope>PHOSPHORYLATION [LARGE SCALE ANALYSIS] AT THR-392; SER-448 AND SER-486</scope>
    <scope>IDENTIFICATION BY MASS SPECTROMETRY [LARGE SCALE ANALYSIS]</scope>
    <source>
        <tissue>Cervix carcinoma</tissue>
    </source>
</reference>
<reference key="15">
    <citation type="journal article" date="2009" name="Anal. Chem.">
        <title>Lys-N and trypsin cover complementary parts of the phosphoproteome in a refined SCX-based approach.</title>
        <authorList>
            <person name="Gauci S."/>
            <person name="Helbig A.O."/>
            <person name="Slijper M."/>
            <person name="Krijgsveld J."/>
            <person name="Heck A.J."/>
            <person name="Mohammed S."/>
        </authorList>
    </citation>
    <scope>IDENTIFICATION BY MASS SPECTROMETRY [LARGE SCALE ANALYSIS]</scope>
</reference>
<reference key="16">
    <citation type="journal article" date="2009" name="Sci. Signal.">
        <title>Quantitative phosphoproteomic analysis of T cell receptor signaling reveals system-wide modulation of protein-protein interactions.</title>
        <authorList>
            <person name="Mayya V."/>
            <person name="Lundgren D.H."/>
            <person name="Hwang S.-I."/>
            <person name="Rezaul K."/>
            <person name="Wu L."/>
            <person name="Eng J.K."/>
            <person name="Rodionov V."/>
            <person name="Han D.K."/>
        </authorList>
    </citation>
    <scope>PHOSPHORYLATION [LARGE SCALE ANALYSIS] AT THR-430; SER-448 AND THR-764</scope>
    <scope>IDENTIFICATION BY MASS SPECTROMETRY [LARGE SCALE ANALYSIS]</scope>
    <source>
        <tissue>Leukemic T-cell</tissue>
    </source>
</reference>
<reference key="17">
    <citation type="journal article" date="2010" name="Sci. Signal.">
        <title>Quantitative phosphoproteomics reveals widespread full phosphorylation site occupancy during mitosis.</title>
        <authorList>
            <person name="Olsen J.V."/>
            <person name="Vermeulen M."/>
            <person name="Santamaria A."/>
            <person name="Kumar C."/>
            <person name="Miller M.L."/>
            <person name="Jensen L.J."/>
            <person name="Gnad F."/>
            <person name="Cox J."/>
            <person name="Jensen T.S."/>
            <person name="Nigg E.A."/>
            <person name="Brunak S."/>
            <person name="Mann M."/>
        </authorList>
    </citation>
    <scope>PHOSPHORYLATION [LARGE SCALE ANALYSIS] AT SER-448; SER-521; SER-591; SER-596 AND SER-598</scope>
    <scope>IDENTIFICATION BY MASS SPECTROMETRY [LARGE SCALE ANALYSIS]</scope>
    <source>
        <tissue>Cervix carcinoma</tissue>
    </source>
</reference>
<reference key="18">
    <citation type="journal article" date="2011" name="BMC Syst. Biol.">
        <title>Initial characterization of the human central proteome.</title>
        <authorList>
            <person name="Burkard T.R."/>
            <person name="Planyavsky M."/>
            <person name="Kaupe I."/>
            <person name="Breitwieser F.P."/>
            <person name="Buerckstuemmer T."/>
            <person name="Bennett K.L."/>
            <person name="Superti-Furga G."/>
            <person name="Colinge J."/>
        </authorList>
    </citation>
    <scope>IDENTIFICATION BY MASS SPECTROMETRY [LARGE SCALE ANALYSIS]</scope>
</reference>
<reference key="19">
    <citation type="journal article" date="2011" name="Sci. Signal.">
        <title>System-wide temporal characterization of the proteome and phosphoproteome of human embryonic stem cell differentiation.</title>
        <authorList>
            <person name="Rigbolt K.T."/>
            <person name="Prokhorova T.A."/>
            <person name="Akimov V."/>
            <person name="Henningsen J."/>
            <person name="Johansen P.T."/>
            <person name="Kratchmarova I."/>
            <person name="Kassem M."/>
            <person name="Mann M."/>
            <person name="Olsen J.V."/>
            <person name="Blagoev B."/>
        </authorList>
    </citation>
    <scope>PHOSPHORYLATION [LARGE SCALE ANALYSIS] AT SER-448</scope>
    <scope>IDENTIFICATION BY MASS SPECTROMETRY [LARGE SCALE ANALYSIS]</scope>
</reference>
<reference key="20">
    <citation type="journal article" date="2013" name="J. Proteome Res.">
        <title>Toward a comprehensive characterization of a human cancer cell phosphoproteome.</title>
        <authorList>
            <person name="Zhou H."/>
            <person name="Di Palma S."/>
            <person name="Preisinger C."/>
            <person name="Peng M."/>
            <person name="Polat A.N."/>
            <person name="Heck A.J."/>
            <person name="Mohammed S."/>
        </authorList>
    </citation>
    <scope>PHOSPHORYLATION [LARGE SCALE ANALYSIS] AT SER-321; SER-348; THR-392; THR-430; SER-448; SER-761 AND SER-789</scope>
    <scope>IDENTIFICATION BY MASS SPECTROMETRY [LARGE SCALE ANALYSIS]</scope>
    <source>
        <tissue>Cervix carcinoma</tissue>
        <tissue>Erythroleukemia</tissue>
    </source>
</reference>
<reference key="21">
    <citation type="journal article" date="2014" name="J. Proteomics">
        <title>An enzyme assisted RP-RPLC approach for in-depth analysis of human liver phosphoproteome.</title>
        <authorList>
            <person name="Bian Y."/>
            <person name="Song C."/>
            <person name="Cheng K."/>
            <person name="Dong M."/>
            <person name="Wang F."/>
            <person name="Huang J."/>
            <person name="Sun D."/>
            <person name="Wang L."/>
            <person name="Ye M."/>
            <person name="Zou H."/>
        </authorList>
    </citation>
    <scope>PHOSPHORYLATION [LARGE SCALE ANALYSIS] AT SER-474 AND SER-621</scope>
    <scope>IDENTIFICATION BY MASS SPECTROMETRY [LARGE SCALE ANALYSIS]</scope>
    <source>
        <tissue>Liver</tissue>
    </source>
</reference>
<reference key="22">
    <citation type="journal article" date="2014" name="Nat. Struct. Mol. Biol.">
        <title>Uncovering global SUMOylation signaling networks in a site-specific manner.</title>
        <authorList>
            <person name="Hendriks I.A."/>
            <person name="D'Souza R.C."/>
            <person name="Yang B."/>
            <person name="Verlaan-de Vries M."/>
            <person name="Mann M."/>
            <person name="Vertegaal A.C."/>
        </authorList>
    </citation>
    <scope>SUMOYLATION [LARGE SCALE ANALYSIS] AT LYS-141; LYS-147 AND LYS-188</scope>
    <scope>IDENTIFICATION BY MASS SPECTROMETRY [LARGE SCALE ANALYSIS]</scope>
</reference>
<reference key="23">
    <citation type="journal article" date="2014" name="Proc. Natl. Acad. Sci. U.S.A.">
        <title>Mapping of SUMO sites and analysis of SUMOylation changes induced by external stimuli.</title>
        <authorList>
            <person name="Impens F."/>
            <person name="Radoshevich L."/>
            <person name="Cossart P."/>
            <person name="Ribet D."/>
        </authorList>
    </citation>
    <scope>SUMOYLATION [LARGE SCALE ANALYSIS] AT LYS-141</scope>
    <scope>IDENTIFICATION BY MASS SPECTROMETRY [LARGE SCALE ANALYSIS]</scope>
</reference>
<reference key="24">
    <citation type="journal article" date="2014" name="EMBO Rep.">
        <title>UBL5 is essential for pre-mRNA splicing and sister chromatid cohesion in human cells.</title>
        <authorList>
            <person name="Oka Y."/>
            <person name="Varmark H."/>
            <person name="Vitting-Seerup K."/>
            <person name="Beli P."/>
            <person name="Waage J."/>
            <person name="Hakobyan A."/>
            <person name="Mistrik M."/>
            <person name="Choudhary C."/>
            <person name="Rohde M."/>
            <person name="Bekker-Jensen S."/>
            <person name="Mailand N."/>
        </authorList>
    </citation>
    <scope>INTERACTION WITH UBL5</scope>
    <scope>FUNCTION</scope>
</reference>
<reference key="25">
    <citation type="journal article" date="2015" name="Cell Rep.">
        <title>SUMO-2 orchestrates chromatin modifiers in response to DNA damage.</title>
        <authorList>
            <person name="Hendriks I.A."/>
            <person name="Treffers L.W."/>
            <person name="Verlaan-de Vries M."/>
            <person name="Olsen J.V."/>
            <person name="Vertegaal A.C."/>
        </authorList>
    </citation>
    <scope>SUMOYLATION [LARGE SCALE ANALYSIS] AT LYS-141; LYS-147 AND LYS-188</scope>
    <scope>IDENTIFICATION BY MASS SPECTROMETRY [LARGE SCALE ANALYSIS]</scope>
</reference>
<reference key="26">
    <citation type="journal article" date="2015" name="Mol. Cell. Proteomics">
        <title>System-wide analysis of SUMOylation dynamics in response to replication stress reveals novel small ubiquitin-like modified target proteins and acceptor lysines relevant for genome stability.</title>
        <authorList>
            <person name="Xiao Z."/>
            <person name="Chang J.G."/>
            <person name="Hendriks I.A."/>
            <person name="Sigurdsson J.O."/>
            <person name="Olsen J.V."/>
            <person name="Vertegaal A.C."/>
        </authorList>
    </citation>
    <scope>SUMOYLATION [LARGE SCALE ANALYSIS] AT LYS-141; LYS-147 AND LYS-188</scope>
    <scope>IDENTIFICATION BY MASS SPECTROMETRY [LARGE SCALE ANALYSIS]</scope>
</reference>
<reference key="27">
    <citation type="journal article" date="2017" name="Nat. Struct. Mol. Biol.">
        <title>Site-specific mapping of the human SUMO proteome reveals co-modification with phosphorylation.</title>
        <authorList>
            <person name="Hendriks I.A."/>
            <person name="Lyon D."/>
            <person name="Young C."/>
            <person name="Jensen L.J."/>
            <person name="Vertegaal A.C."/>
            <person name="Nielsen M.L."/>
        </authorList>
    </citation>
    <scope>SUMOYLATION [LARGE SCALE ANALYSIS] AT LYS-125; LYS-133; LYS-141; LYS-147; LYS-188; LYS-277; LYS-329; LYS-336; LYS-400; LYS-414; LYS-548; LYS-648; LYS-657; LYS-684; LYS-699; LYS-709; LYS-723; LYS-749; LYS-758; LYS-775; LYS-780 AND LYS-791</scope>
    <scope>IDENTIFICATION BY MASS SPECTROMETRY [LARGE SCALE ANALYSIS]</scope>
</reference>
<reference key="28">
    <citation type="journal article" date="2018" name="Proc. Natl. Acad. Sci. U.S.A.">
        <title>Structural-functional interactions of NS1-BP protein with the splicing and mRNA export machineries for viral and host gene expression.</title>
        <authorList>
            <person name="Zhang K."/>
            <person name="Shang G."/>
            <person name="Padavannil A."/>
            <person name="Wang J."/>
            <person name="Sakthivel R."/>
            <person name="Chen X."/>
            <person name="Kim M."/>
            <person name="Thompson M.G."/>
            <person name="Garcia-Sastre A."/>
            <person name="Lynch K.W."/>
            <person name="Chen Z.J."/>
            <person name="Chook Y.M."/>
            <person name="Fontoura B.M.A."/>
        </authorList>
    </citation>
    <scope>INTERACTION WITH IVNS1ABP</scope>
</reference>
<feature type="chain" id="PRO_0000223308" description="U4/U6.U5 tri-snRNP-associated protein 1">
    <location>
        <begin position="1"/>
        <end position="800"/>
    </location>
</feature>
<feature type="region of interest" description="Disordered" evidence="3">
    <location>
        <begin position="1"/>
        <end position="120"/>
    </location>
</feature>
<feature type="region of interest" description="Disordered" evidence="3">
    <location>
        <begin position="311"/>
        <end position="330"/>
    </location>
</feature>
<feature type="region of interest" description="Disordered" evidence="3">
    <location>
        <begin position="419"/>
        <end position="497"/>
    </location>
</feature>
<feature type="region of interest" description="Disordered" evidence="3">
    <location>
        <begin position="571"/>
        <end position="604"/>
    </location>
</feature>
<feature type="coiled-coil region" evidence="2">
    <location>
        <begin position="157"/>
        <end position="231"/>
    </location>
</feature>
<feature type="coiled-coil region" evidence="2">
    <location>
        <begin position="490"/>
        <end position="533"/>
    </location>
</feature>
<feature type="compositionally biased region" description="Basic residues" evidence="3">
    <location>
        <begin position="32"/>
        <end position="42"/>
    </location>
</feature>
<feature type="compositionally biased region" description="Basic and acidic residues" evidence="3">
    <location>
        <begin position="58"/>
        <end position="101"/>
    </location>
</feature>
<feature type="compositionally biased region" description="Low complexity" evidence="3">
    <location>
        <begin position="104"/>
        <end position="119"/>
    </location>
</feature>
<feature type="modified residue" description="Phosphothreonine" evidence="1">
    <location>
        <position position="189"/>
    </location>
</feature>
<feature type="modified residue" description="Phosphoserine" evidence="20">
    <location>
        <position position="321"/>
    </location>
</feature>
<feature type="modified residue" description="Phosphoserine" evidence="20">
    <location>
        <position position="348"/>
    </location>
</feature>
<feature type="modified residue" description="Phosphothreonine" evidence="16 20">
    <location>
        <position position="392"/>
    </location>
</feature>
<feature type="modified residue" description="Phosphothreonine" evidence="14 17 20">
    <location>
        <position position="430"/>
    </location>
</feature>
<feature type="modified residue" description="Phosphoserine" evidence="13 15 16 17 18 19 20">
    <location>
        <position position="448"/>
    </location>
</feature>
<feature type="modified residue" description="Phosphoserine" evidence="21">
    <location>
        <position position="474"/>
    </location>
</feature>
<feature type="modified residue" description="Phosphoserine" evidence="16">
    <location>
        <position position="486"/>
    </location>
</feature>
<feature type="modified residue" description="Phosphoserine" evidence="18">
    <location>
        <position position="521"/>
    </location>
</feature>
<feature type="modified residue" description="Phosphoserine" evidence="13 18">
    <location>
        <position position="591"/>
    </location>
</feature>
<feature type="modified residue" description="Phosphoserine" evidence="18">
    <location>
        <position position="596"/>
    </location>
</feature>
<feature type="modified residue" description="Phosphoserine" evidence="18">
    <location>
        <position position="598"/>
    </location>
</feature>
<feature type="modified residue" description="Phosphoserine" evidence="21">
    <location>
        <position position="621"/>
    </location>
</feature>
<feature type="modified residue" description="Phosphothreonine" evidence="14">
    <location>
        <position position="695"/>
    </location>
</feature>
<feature type="modified residue" description="Phosphoserine" evidence="20">
    <location>
        <position position="761"/>
    </location>
</feature>
<feature type="modified residue" description="Phosphothreonine" evidence="17">
    <location>
        <position position="764"/>
    </location>
</feature>
<feature type="modified residue" description="Phosphoserine" evidence="20">
    <location>
        <position position="789"/>
    </location>
</feature>
<feature type="cross-link" description="Glycyl lysine isopeptide (Lys-Gly) (interchain with G-Cter in SUMO2)" evidence="26">
    <location>
        <position position="125"/>
    </location>
</feature>
<feature type="cross-link" description="Glycyl lysine isopeptide (Lys-Gly) (interchain with G-Cter in SUMO2)" evidence="26">
    <location>
        <position position="133"/>
    </location>
</feature>
<feature type="cross-link" description="Glycyl lysine isopeptide (Lys-Gly) (interchain with G-Cter in SUMO1); alternate" evidence="22">
    <location>
        <position position="141"/>
    </location>
</feature>
<feature type="cross-link" description="Glycyl lysine isopeptide (Lys-Gly) (interchain with G-Cter in SUMO2); alternate" evidence="22 23 24 25 26">
    <location>
        <position position="141"/>
    </location>
</feature>
<feature type="cross-link" description="Glycyl lysine isopeptide (Lys-Gly) (interchain with G-Cter in SUMO2)" evidence="23 24 25 26">
    <location>
        <position position="147"/>
    </location>
</feature>
<feature type="cross-link" description="Glycyl lysine isopeptide (Lys-Gly) (interchain with G-Cter in SUMO2)" evidence="23 24 25 26">
    <location>
        <position position="188"/>
    </location>
</feature>
<feature type="cross-link" description="Glycyl lysine isopeptide (Lys-Gly) (interchain with G-Cter in SUMO2)" evidence="26">
    <location>
        <position position="277"/>
    </location>
</feature>
<feature type="cross-link" description="Glycyl lysine isopeptide (Lys-Gly) (interchain with G-Cter in SUMO2)" evidence="26">
    <location>
        <position position="329"/>
    </location>
</feature>
<feature type="cross-link" description="Glycyl lysine isopeptide (Lys-Gly) (interchain with G-Cter in SUMO2)" evidence="26">
    <location>
        <position position="336"/>
    </location>
</feature>
<feature type="cross-link" description="Glycyl lysine isopeptide (Lys-Gly) (interchain with G-Cter in SUMO2)" evidence="26">
    <location>
        <position position="400"/>
    </location>
</feature>
<feature type="cross-link" description="Glycyl lysine isopeptide (Lys-Gly) (interchain with G-Cter in SUMO2)" evidence="26">
    <location>
        <position position="414"/>
    </location>
</feature>
<feature type="cross-link" description="Glycyl lysine isopeptide (Lys-Gly) (interchain with G-Cter in SUMO2)" evidence="26">
    <location>
        <position position="548"/>
    </location>
</feature>
<feature type="cross-link" description="Glycyl lysine isopeptide (Lys-Gly) (interchain with G-Cter in SUMO2)" evidence="26">
    <location>
        <position position="648"/>
    </location>
</feature>
<feature type="cross-link" description="Glycyl lysine isopeptide (Lys-Gly) (interchain with G-Cter in SUMO2)" evidence="26">
    <location>
        <position position="657"/>
    </location>
</feature>
<feature type="cross-link" description="Glycyl lysine isopeptide (Lys-Gly) (interchain with G-Cter in SUMO2)" evidence="26">
    <location>
        <position position="684"/>
    </location>
</feature>
<feature type="cross-link" description="Glycyl lysine isopeptide (Lys-Gly) (interchain with G-Cter in SUMO2)" evidence="26">
    <location>
        <position position="699"/>
    </location>
</feature>
<feature type="cross-link" description="Glycyl lysine isopeptide (Lys-Gly) (interchain with G-Cter in SUMO2)" evidence="26">
    <location>
        <position position="709"/>
    </location>
</feature>
<feature type="cross-link" description="Glycyl lysine isopeptide (Lys-Gly) (interchain with G-Cter in SUMO2)" evidence="26">
    <location>
        <position position="723"/>
    </location>
</feature>
<feature type="cross-link" description="Glycyl lysine isopeptide (Lys-Gly) (interchain with G-Cter in SUMO2)" evidence="26">
    <location>
        <position position="749"/>
    </location>
</feature>
<feature type="cross-link" description="Glycyl lysine isopeptide (Lys-Gly) (interchain with G-Cter in SUMO2)" evidence="26">
    <location>
        <position position="758"/>
    </location>
</feature>
<feature type="cross-link" description="Glycyl lysine isopeptide (Lys-Gly) (interchain with G-Cter in SUMO2)" evidence="26">
    <location>
        <position position="775"/>
    </location>
</feature>
<feature type="cross-link" description="Glycyl lysine isopeptide (Lys-Gly) (interchain with G-Cter in SUMO2)" evidence="26">
    <location>
        <position position="780"/>
    </location>
</feature>
<feature type="cross-link" description="Glycyl lysine isopeptide (Lys-Gly) (interchain with G-Cter in SUMO2)" evidence="26">
    <location>
        <position position="791"/>
    </location>
</feature>
<feature type="sequence variant" id="VAR_051367" description="In dbSNP:rs688862.">
    <original>R</original>
    <variation>C</variation>
    <location>
        <position position="245"/>
    </location>
</feature>
<feature type="sequence variant" id="VAR_034504" description="In dbSNP:rs35036096.">
    <original>S</original>
    <variation>A</variation>
    <location>
        <position position="463"/>
    </location>
</feature>
<feature type="sequence variant" id="VAR_025319" description="In dbSNP:rs660118." evidence="11">
    <original>G</original>
    <variation>A</variation>
    <location>
        <position position="485"/>
    </location>
</feature>
<feature type="sequence conflict" description="In Ref. 4; BAD96736." evidence="12" ref="4">
    <original>Q</original>
    <variation>R</variation>
    <location>
        <position position="209"/>
    </location>
</feature>
<feature type="sequence conflict" description="In Ref. 4; BAD96736." evidence="12" ref="4">
    <original>Y</original>
    <variation>H</variation>
    <location>
        <position position="712"/>
    </location>
</feature>
<feature type="helix" evidence="27">
    <location>
        <begin position="120"/>
        <end position="129"/>
    </location>
</feature>
<feature type="helix" evidence="28">
    <location>
        <begin position="158"/>
        <end position="183"/>
    </location>
</feature>
<feature type="turn" evidence="29">
    <location>
        <begin position="196"/>
        <end position="198"/>
    </location>
</feature>
<feature type="helix" evidence="28">
    <location>
        <begin position="201"/>
        <end position="218"/>
    </location>
</feature>
<feature type="helix" evidence="28">
    <location>
        <begin position="252"/>
        <end position="254"/>
    </location>
</feature>
<feature type="strand" evidence="29">
    <location>
        <begin position="258"/>
        <end position="261"/>
    </location>
</feature>
<feature type="helix" evidence="28">
    <location>
        <begin position="263"/>
        <end position="265"/>
    </location>
</feature>
<feature type="strand" evidence="28">
    <location>
        <begin position="272"/>
        <end position="276"/>
    </location>
</feature>
<feature type="strand" evidence="28">
    <location>
        <begin position="288"/>
        <end position="290"/>
    </location>
</feature>
<feature type="helix" evidence="28">
    <location>
        <begin position="292"/>
        <end position="308"/>
    </location>
</feature>
<feature type="helix" evidence="28">
    <location>
        <begin position="335"/>
        <end position="337"/>
    </location>
</feature>
<feature type="helix" evidence="28">
    <location>
        <begin position="338"/>
        <end position="342"/>
    </location>
</feature>
<feature type="helix" evidence="28">
    <location>
        <begin position="353"/>
        <end position="355"/>
    </location>
</feature>
<feature type="helix" evidence="28">
    <location>
        <begin position="360"/>
        <end position="374"/>
    </location>
</feature>
<feature type="helix" evidence="30">
    <location>
        <begin position="722"/>
        <end position="734"/>
    </location>
</feature>
<feature type="helix" evidence="30">
    <location>
        <begin position="740"/>
        <end position="757"/>
    </location>
</feature>
<dbReference type="EMBL" id="AB006198">
    <property type="protein sequence ID" value="BAA24056.1"/>
    <property type="molecule type" value="mRNA"/>
</dbReference>
<dbReference type="EMBL" id="AF353625">
    <property type="protein sequence ID" value="AAK49523.1"/>
    <property type="molecule type" value="mRNA"/>
</dbReference>
<dbReference type="EMBL" id="BT006637">
    <property type="protein sequence ID" value="AAP35283.1"/>
    <property type="molecule type" value="mRNA"/>
</dbReference>
<dbReference type="EMBL" id="AK223016">
    <property type="protein sequence ID" value="BAD96736.1"/>
    <property type="molecule type" value="mRNA"/>
</dbReference>
<dbReference type="EMBL" id="AP006287">
    <property type="status" value="NOT_ANNOTATED_CDS"/>
    <property type="molecule type" value="Genomic_DNA"/>
</dbReference>
<dbReference type="EMBL" id="BC001058">
    <property type="protein sequence ID" value="AAH01058.1"/>
    <property type="molecule type" value="mRNA"/>
</dbReference>
<dbReference type="EMBL" id="AF109680">
    <property type="protein sequence ID" value="AAD20223.1"/>
    <property type="molecule type" value="Genomic_DNA"/>
</dbReference>
<dbReference type="CCDS" id="CCDS31611.1">
    <molecule id="O43290-1"/>
</dbReference>
<dbReference type="PIR" id="T00034">
    <property type="entry name" value="T00034"/>
</dbReference>
<dbReference type="RefSeq" id="NP_005137.1">
    <molecule id="O43290-1"/>
    <property type="nucleotide sequence ID" value="NM_005146.5"/>
</dbReference>
<dbReference type="PDB" id="4PYU">
    <property type="method" value="X-ray"/>
    <property type="resolution" value="2.00 A"/>
    <property type="chains" value="C/D/H/L/P/T=117-135"/>
</dbReference>
<dbReference type="PDB" id="5O9Z">
    <property type="method" value="EM"/>
    <property type="resolution" value="4.50 A"/>
    <property type="chains" value="P=1-800"/>
</dbReference>
<dbReference type="PDB" id="6AHD">
    <property type="method" value="EM"/>
    <property type="resolution" value="3.80 A"/>
    <property type="chains" value="9=1-800"/>
</dbReference>
<dbReference type="PDB" id="6QW6">
    <property type="method" value="EM"/>
    <property type="resolution" value="2.92 A"/>
    <property type="chains" value="S=1-800"/>
</dbReference>
<dbReference type="PDB" id="6QX9">
    <property type="method" value="EM"/>
    <property type="resolution" value="3.28 A"/>
    <property type="chains" value="S=1-800"/>
</dbReference>
<dbReference type="PDB" id="8H6E">
    <property type="method" value="EM"/>
    <property type="resolution" value="3.20 A"/>
    <property type="chains" value="4S=1-800"/>
</dbReference>
<dbReference type="PDB" id="8H6J">
    <property type="method" value="EM"/>
    <property type="resolution" value="3.25 A"/>
    <property type="chains" value="4S=1-800"/>
</dbReference>
<dbReference type="PDB" id="8H6K">
    <property type="method" value="EM"/>
    <property type="resolution" value="2.70 A"/>
    <property type="chains" value="4J=1-800"/>
</dbReference>
<dbReference type="PDB" id="8H6L">
    <property type="method" value="EM"/>
    <property type="resolution" value="2.60 A"/>
    <property type="chains" value="4J=1-800"/>
</dbReference>
<dbReference type="PDB" id="8Q7N">
    <property type="method" value="EM"/>
    <property type="resolution" value="3.10 A"/>
    <property type="chains" value="S=1-800"/>
</dbReference>
<dbReference type="PDB" id="8QO9">
    <property type="method" value="EM"/>
    <property type="resolution" value="5.29 A"/>
    <property type="chains" value="S=1-800"/>
</dbReference>
<dbReference type="PDB" id="8QOZ">
    <property type="method" value="EM"/>
    <property type="resolution" value="3.10 A"/>
    <property type="chains" value="S=1-800"/>
</dbReference>
<dbReference type="PDB" id="8QP8">
    <property type="method" value="EM"/>
    <property type="resolution" value="3.50 A"/>
    <property type="chains" value="S=1-800"/>
</dbReference>
<dbReference type="PDB" id="8QP9">
    <property type="method" value="EM"/>
    <property type="resolution" value="4.10 A"/>
    <property type="chains" value="S=1-800"/>
</dbReference>
<dbReference type="PDB" id="8QPA">
    <property type="method" value="EM"/>
    <property type="resolution" value="3.70 A"/>
    <property type="chains" value="S=1-800"/>
</dbReference>
<dbReference type="PDB" id="8QPB">
    <property type="method" value="EM"/>
    <property type="resolution" value="3.70 A"/>
    <property type="chains" value="S=1-800"/>
</dbReference>
<dbReference type="PDB" id="8QPE">
    <property type="method" value="EM"/>
    <property type="resolution" value="3.10 A"/>
    <property type="chains" value="S=1-800"/>
</dbReference>
<dbReference type="PDB" id="8QPK">
    <property type="method" value="EM"/>
    <property type="resolution" value="4.20 A"/>
    <property type="chains" value="S=1-800"/>
</dbReference>
<dbReference type="PDB" id="8QXD">
    <property type="method" value="EM"/>
    <property type="resolution" value="9.60 A"/>
    <property type="chains" value="S=1-800"/>
</dbReference>
<dbReference type="PDB" id="8QZS">
    <property type="method" value="EM"/>
    <property type="resolution" value="4.10 A"/>
    <property type="chains" value="S=1-800"/>
</dbReference>
<dbReference type="PDB" id="8R08">
    <property type="method" value="EM"/>
    <property type="resolution" value="6.10 A"/>
    <property type="chains" value="S=1-800"/>
</dbReference>
<dbReference type="PDB" id="8R09">
    <property type="method" value="EM"/>
    <property type="resolution" value="4.30 A"/>
    <property type="chains" value="S=1-800"/>
</dbReference>
<dbReference type="PDB" id="8R0A">
    <property type="method" value="EM"/>
    <property type="resolution" value="5.80 A"/>
    <property type="chains" value="S=1-800"/>
</dbReference>
<dbReference type="PDB" id="8R0B">
    <property type="method" value="EM"/>
    <property type="resolution" value="4.40 A"/>
    <property type="chains" value="S=1-800"/>
</dbReference>
<dbReference type="PDB" id="8RM5">
    <property type="method" value="EM"/>
    <property type="resolution" value="6.90 A"/>
    <property type="chains" value="S=1-800"/>
</dbReference>
<dbReference type="PDB" id="8Y6O">
    <property type="method" value="EM"/>
    <property type="resolution" value="3.38 A"/>
    <property type="chains" value="S=1-800"/>
</dbReference>
<dbReference type="PDBsum" id="4PYU"/>
<dbReference type="PDBsum" id="5O9Z"/>
<dbReference type="PDBsum" id="6AHD"/>
<dbReference type="PDBsum" id="6QW6"/>
<dbReference type="PDBsum" id="6QX9"/>
<dbReference type="PDBsum" id="8H6E"/>
<dbReference type="PDBsum" id="8H6J"/>
<dbReference type="PDBsum" id="8H6K"/>
<dbReference type="PDBsum" id="8H6L"/>
<dbReference type="PDBsum" id="8Q7N"/>
<dbReference type="PDBsum" id="8QO9"/>
<dbReference type="PDBsum" id="8QOZ"/>
<dbReference type="PDBsum" id="8QP8"/>
<dbReference type="PDBsum" id="8QP9"/>
<dbReference type="PDBsum" id="8QPA"/>
<dbReference type="PDBsum" id="8QPB"/>
<dbReference type="PDBsum" id="8QPE"/>
<dbReference type="PDBsum" id="8QPK"/>
<dbReference type="PDBsum" id="8QXD"/>
<dbReference type="PDBsum" id="8QZS"/>
<dbReference type="PDBsum" id="8R08"/>
<dbReference type="PDBsum" id="8R09"/>
<dbReference type="PDBsum" id="8R0A"/>
<dbReference type="PDBsum" id="8R0B"/>
<dbReference type="PDBsum" id="8RM5"/>
<dbReference type="PDBsum" id="8Y6O"/>
<dbReference type="EMDB" id="EMD-18225"/>
<dbReference type="EMDB" id="EMD-18529"/>
<dbReference type="EMDB" id="EMD-18542"/>
<dbReference type="EMDB" id="EMD-18544"/>
<dbReference type="EMDB" id="EMD-18545"/>
<dbReference type="EMDB" id="EMD-18546"/>
<dbReference type="EMDB" id="EMD-18547"/>
<dbReference type="EMDB" id="EMD-18548"/>
<dbReference type="EMDB" id="EMD-18555"/>
<dbReference type="EMDB" id="EMD-18718"/>
<dbReference type="EMDB" id="EMD-18781"/>
<dbReference type="EMDB" id="EMD-18786"/>
<dbReference type="EMDB" id="EMD-18787"/>
<dbReference type="EMDB" id="EMD-18788"/>
<dbReference type="EMDB" id="EMD-18789"/>
<dbReference type="EMDB" id="EMD-19349"/>
<dbReference type="EMDB" id="EMD-34500"/>
<dbReference type="EMDB" id="EMD-34505"/>
<dbReference type="EMDB" id="EMD-34507"/>
<dbReference type="EMDB" id="EMD-34508"/>
<dbReference type="EMDB" id="EMD-3766"/>
<dbReference type="EMDB" id="EMD-38993"/>
<dbReference type="EMDB" id="EMD-4658"/>
<dbReference type="EMDB" id="EMD-4665"/>
<dbReference type="EMDB" id="EMD-9624"/>
<dbReference type="SMR" id="O43290"/>
<dbReference type="BioGRID" id="114546">
    <property type="interactions" value="333"/>
</dbReference>
<dbReference type="ComplexPortal" id="CPX-2391">
    <property type="entry name" value="U4/U6.U5 small nuclear ribonucleoprotein complex"/>
</dbReference>
<dbReference type="CORUM" id="O43290"/>
<dbReference type="DIP" id="DIP-33360N"/>
<dbReference type="FunCoup" id="O43290">
    <property type="interactions" value="4416"/>
</dbReference>
<dbReference type="IntAct" id="O43290">
    <property type="interactions" value="144"/>
</dbReference>
<dbReference type="MINT" id="O43290"/>
<dbReference type="STRING" id="9606.ENSP00000310448"/>
<dbReference type="Allergome" id="3322">
    <property type="allergen name" value="Hom s 1.0101"/>
</dbReference>
<dbReference type="Allergome" id="411">
    <property type="allergen name" value="Hom s 1"/>
</dbReference>
<dbReference type="GlyGen" id="O43290">
    <property type="glycosylation" value="1 site, 1 O-linked glycan (1 site)"/>
</dbReference>
<dbReference type="iPTMnet" id="O43290"/>
<dbReference type="MetOSite" id="O43290"/>
<dbReference type="PhosphoSitePlus" id="O43290"/>
<dbReference type="SwissPalm" id="O43290"/>
<dbReference type="BioMuta" id="SART1"/>
<dbReference type="jPOST" id="O43290"/>
<dbReference type="MassIVE" id="O43290"/>
<dbReference type="PaxDb" id="9606-ENSP00000310448"/>
<dbReference type="PeptideAtlas" id="O43290"/>
<dbReference type="ProteomicsDB" id="48858">
    <molecule id="O43290-1"/>
</dbReference>
<dbReference type="Pumba" id="O43290"/>
<dbReference type="Antibodypedia" id="30019">
    <property type="antibodies" value="214 antibodies from 35 providers"/>
</dbReference>
<dbReference type="DNASU" id="9092"/>
<dbReference type="Ensembl" id="ENST00000312397.10">
    <molecule id="O43290-1"/>
    <property type="protein sequence ID" value="ENSP00000310448.5"/>
    <property type="gene ID" value="ENSG00000175467.15"/>
</dbReference>
<dbReference type="GeneID" id="9092"/>
<dbReference type="KEGG" id="hsa:9092"/>
<dbReference type="MANE-Select" id="ENST00000312397.10">
    <property type="protein sequence ID" value="ENSP00000310448.5"/>
    <property type="RefSeq nucleotide sequence ID" value="NM_005146.5"/>
    <property type="RefSeq protein sequence ID" value="NP_005137.1"/>
</dbReference>
<dbReference type="UCSC" id="uc001ogl.4">
    <molecule id="O43290-1"/>
    <property type="organism name" value="human"/>
</dbReference>
<dbReference type="AGR" id="HGNC:10538"/>
<dbReference type="CTD" id="9092"/>
<dbReference type="DisGeNET" id="9092"/>
<dbReference type="GeneCards" id="SART1"/>
<dbReference type="HGNC" id="HGNC:10538">
    <property type="gene designation" value="SART1"/>
</dbReference>
<dbReference type="HPA" id="ENSG00000175467">
    <property type="expression patterns" value="Low tissue specificity"/>
</dbReference>
<dbReference type="MIM" id="605941">
    <property type="type" value="gene"/>
</dbReference>
<dbReference type="neXtProt" id="NX_O43290"/>
<dbReference type="OpenTargets" id="ENSG00000175467"/>
<dbReference type="PharmGKB" id="PA34947"/>
<dbReference type="VEuPathDB" id="HostDB:ENSG00000175467"/>
<dbReference type="eggNOG" id="KOG2217">
    <property type="taxonomic scope" value="Eukaryota"/>
</dbReference>
<dbReference type="GeneTree" id="ENSGT00390000007071"/>
<dbReference type="HOGENOM" id="CLU_009379_3_0_1"/>
<dbReference type="InParanoid" id="O43290"/>
<dbReference type="OMA" id="KRRDYTG"/>
<dbReference type="OrthoDB" id="5583at2759"/>
<dbReference type="PAN-GO" id="O43290">
    <property type="GO annotations" value="3 GO annotations based on evolutionary models"/>
</dbReference>
<dbReference type="PhylomeDB" id="O43290"/>
<dbReference type="TreeFam" id="TF318828"/>
<dbReference type="PathwayCommons" id="O43290"/>
<dbReference type="Reactome" id="R-HSA-72163">
    <property type="pathway name" value="mRNA Splicing - Major Pathway"/>
</dbReference>
<dbReference type="SignaLink" id="O43290"/>
<dbReference type="SIGNOR" id="O43290"/>
<dbReference type="BioGRID-ORCS" id="9092">
    <property type="hits" value="616 hits in 1160 CRISPR screens"/>
</dbReference>
<dbReference type="ChiTaRS" id="SART1">
    <property type="organism name" value="human"/>
</dbReference>
<dbReference type="GeneWiki" id="SART1"/>
<dbReference type="GenomeRNAi" id="9092"/>
<dbReference type="Pharos" id="O43290">
    <property type="development level" value="Tbio"/>
</dbReference>
<dbReference type="PRO" id="PR:O43290"/>
<dbReference type="Proteomes" id="UP000005640">
    <property type="component" value="Chromosome 11"/>
</dbReference>
<dbReference type="RNAct" id="O43290">
    <property type="molecule type" value="protein"/>
</dbReference>
<dbReference type="Bgee" id="ENSG00000175467">
    <property type="expression patterns" value="Expressed in tendon of biceps brachii and 207 other cell types or tissues"/>
</dbReference>
<dbReference type="ExpressionAtlas" id="O43290">
    <property type="expression patterns" value="baseline and differential"/>
</dbReference>
<dbReference type="GO" id="GO:0015030">
    <property type="term" value="C:Cajal body"/>
    <property type="evidence" value="ECO:0000314"/>
    <property type="project" value="BHF-UCL"/>
</dbReference>
<dbReference type="GO" id="GO:0071013">
    <property type="term" value="C:catalytic step 2 spliceosome"/>
    <property type="evidence" value="ECO:0000314"/>
    <property type="project" value="UniProtKB"/>
</dbReference>
<dbReference type="GO" id="GO:0005737">
    <property type="term" value="C:cytoplasm"/>
    <property type="evidence" value="ECO:0000304"/>
    <property type="project" value="ProtInc"/>
</dbReference>
<dbReference type="GO" id="GO:0005829">
    <property type="term" value="C:cytosol"/>
    <property type="evidence" value="ECO:0000304"/>
    <property type="project" value="UniProtKB"/>
</dbReference>
<dbReference type="GO" id="GO:0005794">
    <property type="term" value="C:Golgi apparatus"/>
    <property type="evidence" value="ECO:0000314"/>
    <property type="project" value="HPA"/>
</dbReference>
<dbReference type="GO" id="GO:0016607">
    <property type="term" value="C:nuclear speck"/>
    <property type="evidence" value="ECO:0000314"/>
    <property type="project" value="HPA"/>
</dbReference>
<dbReference type="GO" id="GO:0005654">
    <property type="term" value="C:nucleoplasm"/>
    <property type="evidence" value="ECO:0000314"/>
    <property type="project" value="BHF-UCL"/>
</dbReference>
<dbReference type="GO" id="GO:0005634">
    <property type="term" value="C:nucleus"/>
    <property type="evidence" value="ECO:0000314"/>
    <property type="project" value="UniProtKB"/>
</dbReference>
<dbReference type="GO" id="GO:0071005">
    <property type="term" value="C:U2-type precatalytic spliceosome"/>
    <property type="evidence" value="ECO:0000314"/>
    <property type="project" value="UniProtKB"/>
</dbReference>
<dbReference type="GO" id="GO:0046540">
    <property type="term" value="C:U4/U6 x U5 tri-snRNP complex"/>
    <property type="evidence" value="ECO:0000353"/>
    <property type="project" value="ComplexPortal"/>
</dbReference>
<dbReference type="GO" id="GO:0003723">
    <property type="term" value="F:RNA binding"/>
    <property type="evidence" value="ECO:0007005"/>
    <property type="project" value="UniProtKB"/>
</dbReference>
<dbReference type="GO" id="GO:0000481">
    <property type="term" value="P:maturation of 5S rRNA"/>
    <property type="evidence" value="ECO:0000318"/>
    <property type="project" value="GO_Central"/>
</dbReference>
<dbReference type="GO" id="GO:0045292">
    <property type="term" value="P:mRNA cis splicing, via spliceosome"/>
    <property type="evidence" value="ECO:0000318"/>
    <property type="project" value="GO_Central"/>
</dbReference>
<dbReference type="GO" id="GO:0000398">
    <property type="term" value="P:mRNA splicing, via spliceosome"/>
    <property type="evidence" value="ECO:0000314"/>
    <property type="project" value="UniProtKB"/>
</dbReference>
<dbReference type="GO" id="GO:0045585">
    <property type="term" value="P:positive regulation of cytotoxic T cell differentiation"/>
    <property type="evidence" value="ECO:0000314"/>
    <property type="project" value="UniProtKB"/>
</dbReference>
<dbReference type="GO" id="GO:0000387">
    <property type="term" value="P:spliceosomal snRNP assembly"/>
    <property type="evidence" value="ECO:0000304"/>
    <property type="project" value="BHF-UCL"/>
</dbReference>
<dbReference type="InterPro" id="IPR045347">
    <property type="entry name" value="HIND"/>
</dbReference>
<dbReference type="InterPro" id="IPR005011">
    <property type="entry name" value="SNU66/SART1"/>
</dbReference>
<dbReference type="PANTHER" id="PTHR14152">
    <property type="entry name" value="SQUAMOUS CELL CARCINOMA ANTIGEN RECOGNISED BY CYTOTOXIC T LYMPHOCYTES"/>
    <property type="match status" value="1"/>
</dbReference>
<dbReference type="PANTHER" id="PTHR14152:SF5">
    <property type="entry name" value="U4_U6.U5 TRI-SNRNP-ASSOCIATED PROTEIN 1"/>
    <property type="match status" value="1"/>
</dbReference>
<dbReference type="Pfam" id="PF19252">
    <property type="entry name" value="HIND"/>
    <property type="match status" value="1"/>
</dbReference>
<dbReference type="Pfam" id="PF03343">
    <property type="entry name" value="SART-1"/>
    <property type="match status" value="1"/>
</dbReference>
<comment type="function">
    <text evidence="4 7">Plays a role in mRNA splicing as a component of the U4/U6-U5 tri-snRNP, one of the building blocks of the spliceosome. May also bind to DNA.</text>
</comment>
<comment type="subunit">
    <text evidence="4 5 6 7 8">Identified in the spliceosome C complex. Component of the U4/U6-U5 tri-snRNP complex composed of the U4, U6 and U5 snRNAs and at least PRPF3, PRPF4, PRPF6, PRPF8, PRPF31, SNRNP200, TXNL4A, SNRNP40, DDX23, CD2BP2, PPIH, SNU13, EFTUD2, SART1 and USP39. Interacts with UBL5 (PubMed:25092792). Interacts with IVNS1ABP (via Kelch repeats) (PubMed:30538201).</text>
</comment>
<comment type="interaction">
    <interactant intactId="EBI-607761">
        <id>O43290</id>
    </interactant>
    <interactant intactId="EBI-7116203">
        <id>O75031</id>
        <label>HSF2BP</label>
    </interactant>
    <organismsDiffer>false</organismsDiffer>
    <experiments>6</experiments>
</comment>
<comment type="interaction">
    <interactant intactId="EBI-607761">
        <id>O43290</id>
    </interactant>
    <interactant intactId="EBI-744322">
        <id>O43395</id>
        <label>PRPF3</label>
    </interactant>
    <organismsDiffer>false</organismsDiffer>
    <experiments>7</experiments>
</comment>
<comment type="interaction">
    <interactant intactId="EBI-607761">
        <id>O43290</id>
    </interactant>
    <interactant intactId="EBI-536755">
        <id>O94906</id>
        <label>PRPF6</label>
    </interactant>
    <organismsDiffer>false</organismsDiffer>
    <experiments>6</experiments>
</comment>
<comment type="interaction">
    <interactant intactId="EBI-607761">
        <id>O43290</id>
    </interactant>
    <interactant intactId="EBI-538479">
        <id>Q6P2Q9</id>
        <label>PRPF8</label>
    </interactant>
    <organismsDiffer>false</organismsDiffer>
    <experiments>2</experiments>
</comment>
<comment type="interaction">
    <interactant intactId="EBI-607761">
        <id>O43290</id>
    </interactant>
    <interactant intactId="EBI-2462271">
        <id>Q15428</id>
        <label>SF3A2</label>
    </interactant>
    <organismsDiffer>false</organismsDiffer>
    <experiments>2</experiments>
</comment>
<comment type="interaction">
    <interactant intactId="EBI-607761">
        <id>O43290</id>
    </interactant>
    <interactant intactId="EBI-1045395">
        <id>O75643</id>
        <label>SNRNP200</label>
    </interactant>
    <organismsDiffer>false</organismsDiffer>
    <experiments>5</experiments>
</comment>
<comment type="interaction">
    <interactant intactId="EBI-607761">
        <id>O43290</id>
    </interactant>
    <interactant intactId="EBI-632715">
        <id>Q13573</id>
        <label>SNW1</label>
    </interactant>
    <organismsDiffer>false</organismsDiffer>
    <experiments>3</experiments>
</comment>
<comment type="interaction">
    <interactant intactId="EBI-607761">
        <id>O43290</id>
    </interactant>
    <interactant intactId="EBI-80140">
        <id>P63165</id>
        <label>SUMO1</label>
    </interactant>
    <organismsDiffer>false</organismsDiffer>
    <experiments>2</experiments>
</comment>
<comment type="interaction">
    <interactant intactId="EBI-607761">
        <id>O43290</id>
    </interactant>
    <interactant intactId="EBI-474067">
        <id>P55854</id>
        <label>SUMO3</label>
    </interactant>
    <organismsDiffer>false</organismsDiffer>
    <experiments>2</experiments>
</comment>
<comment type="interaction">
    <interactant intactId="EBI-607761">
        <id>O43290</id>
    </interactant>
    <interactant intactId="EBI-607755">
        <id>Q9BZL1</id>
        <label>UBL5</label>
    </interactant>
    <organismsDiffer>false</organismsDiffer>
    <experiments>4</experiments>
</comment>
<comment type="subcellular location">
    <subcellularLocation>
        <location evidence="4 9">Nucleus</location>
    </subcellularLocation>
    <text>Found in the nucleus of mitogen-activated peripheral blood mononuclear cells (PBMCs), tumor cells, or normal cell lines, but not in normal tissues except testis and fetal liver or in unstimulated PBMCs, suggesting preferential expression in proliferating cells.</text>
</comment>
<comment type="alternative products">
    <event type="alternative splicing"/>
    <isoform>
        <id>O43290-1</id>
        <name>1</name>
        <name>125 kDa</name>
        <sequence type="displayed"/>
    </isoform>
    <text>A number of isoforms may be produced.</text>
</comment>
<comment type="tissue specificity">
    <text evidence="9">Ubiquitously expressed.</text>
</comment>
<comment type="PTM">
    <text>Sumoylated with SUMO2.</text>
</comment>
<comment type="allergen">
    <text evidence="10">Causes an allergic reaction in human. Binds to IgE from atopic dermatitis (AD) patients. Identified as an IgE autoantigen in atopic dermatitis (AD) patients with severe skin manifestations.</text>
</comment>
<comment type="similarity">
    <text evidence="12">Belongs to the SNU66/SART1 family.</text>
</comment>
<keyword id="KW-0002">3D-structure</keyword>
<keyword id="KW-0020">Allergen</keyword>
<keyword id="KW-0025">Alternative splicing</keyword>
<keyword id="KW-0175">Coiled coil</keyword>
<keyword id="KW-1017">Isopeptide bond</keyword>
<keyword id="KW-0507">mRNA processing</keyword>
<keyword id="KW-0508">mRNA splicing</keyword>
<keyword id="KW-0539">Nucleus</keyword>
<keyword id="KW-0597">Phosphoprotein</keyword>
<keyword id="KW-1267">Proteomics identification</keyword>
<keyword id="KW-1185">Reference proteome</keyword>
<keyword id="KW-0747">Spliceosome</keyword>
<keyword id="KW-0832">Ubl conjugation</keyword>
<proteinExistence type="evidence at protein level"/>
<accession>O43290</accession>
<accession>A6NDN1</accession>
<accession>Q53GB5</accession>
<sequence>MGSSKKHRGEKEAAGTTAAAGTGGATEQPPRHREHKKHKHRSGGSGGSGGERRKRSRERGGERGSGRRGAEAEARSSTHGRERSQAEPSERRVKREKRDDGYEAAASSKTSSGDASSLSIEETNKLRAKLGLKPLEVNAIKKEAGTKEEPVTADVINPMALRQREELREKLAAAKEKRLLNQKLGKIKTLGEDDPWLDDTAAWIERSRQLQKEKDLAEKRAKLLEEMDQEFGVSTLVEEEFGQRRQDLYSARDLQGLTVEHAIDSFREGETMILTLKDKGVLQEEEDVLVNVNLVDKERAEKNVELRKKKPDYLPYAEDESVDDLAQQKPRSILSKYDEELEGERPHSFRLEQGGTADGLRERELEEIRAKLRLQAQSLSTVGPRLASEYLTPEEMVTFKKTKRRVKKIRKKEKEVVVRADDLLPLGDQTQDGDFGSRLRGRGRRRVSEVEEEKEPVPQPLPSDDTRVENMDISDEEEGGAPPPGSPQVLEEDEAELELQKQLEKGRRLRQLQQLQQLRDSGEKVVEIVKKLESRQRGWEEDEDPERKGAIVFNATSEFCRTLGEIPTYGLAGNREEQEELMDFERDEERSANGGSESDGEENIGWSTVNLDEEKQQQDFSASSTTILDEEPIVNRGLAAALLLCQNKGLLETTVQKVARVKAPNKSLPSAVYCIEDKMAIDDKYSRREEYRGFTQDFKEKDGYKPDVKIEYVDETGRKLTPKEAFRQLSHRFHGKGSGKMKTERRMKKLDEEALLKKMSSSDTPLGTVALLQEKQKAQKTPYIVLSGSGKSMNANTITK</sequence>